<keyword id="KW-0535">Nitrogen fixation</keyword>
<keyword id="KW-0547">Nucleotide-binding</keyword>
<keyword id="KW-0597">Phosphoprotein</keyword>
<keyword id="KW-1185">Reference proteome</keyword>
<keyword id="KW-0804">Transcription</keyword>
<keyword id="KW-0805">Transcription regulation</keyword>
<feature type="chain" id="PRO_0000139770" description="Nitrogen regulatory protein P-II">
    <location>
        <begin position="1"/>
        <end position="112"/>
    </location>
</feature>
<feature type="modified residue" description="O-UMP-tyrosine" evidence="2">
    <location>
        <position position="51"/>
    </location>
</feature>
<feature type="sequence conflict" description="In Ref. 1; AAA26214." evidence="3" ref="1">
    <original>KEALQE</original>
    <variation>RSLSG</variation>
    <location>
        <begin position="17"/>
        <end position="22"/>
    </location>
</feature>
<feature type="sequence conflict" description="In Ref. 1; AAA26214." evidence="3" ref="1">
    <original>AE</original>
    <variation>TD</variation>
    <location>
        <begin position="43"/>
        <end position="44"/>
    </location>
</feature>
<proteinExistence type="inferred from homology"/>
<accession>P14179</accession>
<evidence type="ECO:0000250" key="1"/>
<evidence type="ECO:0000255" key="2">
    <source>
        <dbReference type="PROSITE-ProRule" id="PRU00675"/>
    </source>
</evidence>
<evidence type="ECO:0000305" key="3"/>
<reference key="1">
    <citation type="journal article" date="1989" name="J. Bacteriol.">
        <title>Bradyrhizobium japonicum glnB, a putative nitrogen-regulatory gene, is regulated by NtrC at tandem promoters.</title>
        <authorList>
            <person name="Martin G.B."/>
            <person name="Thomashow M.F."/>
            <person name="Chelm B.K."/>
        </authorList>
    </citation>
    <scope>NUCLEOTIDE SEQUENCE [GENOMIC DNA]</scope>
</reference>
<reference key="2">
    <citation type="journal article" date="2002" name="DNA Res.">
        <title>Complete genomic sequence of nitrogen-fixing symbiotic bacterium Bradyrhizobium japonicum USDA110.</title>
        <authorList>
            <person name="Kaneko T."/>
            <person name="Nakamura Y."/>
            <person name="Sato S."/>
            <person name="Minamisawa K."/>
            <person name="Uchiumi T."/>
            <person name="Sasamoto S."/>
            <person name="Watanabe A."/>
            <person name="Idesawa K."/>
            <person name="Iriguchi M."/>
            <person name="Kawashima K."/>
            <person name="Kohara M."/>
            <person name="Matsumoto M."/>
            <person name="Shimpo S."/>
            <person name="Tsuruoka H."/>
            <person name="Wada T."/>
            <person name="Yamada M."/>
            <person name="Tabata S."/>
        </authorList>
    </citation>
    <scope>NUCLEOTIDE SEQUENCE [LARGE SCALE GENOMIC DNA]</scope>
    <source>
        <strain>JCM 10833 / BCRC 13528 / IAM 13628 / NBRC 14792 / USDA 110</strain>
    </source>
</reference>
<reference key="3">
    <citation type="journal article" date="1985" name="J. Bacteriol.">
        <title>Characterization of the gene encoding glutamine synthetase I (glnA) from Bradyrhizobium japonicum.</title>
        <authorList>
            <person name="Carlson T.A."/>
            <person name="Guerinot M.L."/>
            <person name="Chelm B.K."/>
        </authorList>
    </citation>
    <scope>NUCLEOTIDE SEQUENCE [GENOMIC DNA] OF 52-111</scope>
</reference>
<protein>
    <recommendedName>
        <fullName>Nitrogen regulatory protein P-II</fullName>
    </recommendedName>
</protein>
<sequence length="112" mass="12349">MKKIEAIIKPFKLDEVKEALQEVGLQGITVTEAKGFGRQKGHAELYRGAEYIVDFLPKVKIEIVIGDDLVERAIDAIRRAAQTGRIGDGKIFVSNIEEAIRIRTGESGLDAI</sequence>
<organism>
    <name type="scientific">Bradyrhizobium diazoefficiens (strain JCM 10833 / BCRC 13528 / IAM 13628 / NBRC 14792 / USDA 110)</name>
    <dbReference type="NCBI Taxonomy" id="224911"/>
    <lineage>
        <taxon>Bacteria</taxon>
        <taxon>Pseudomonadati</taxon>
        <taxon>Pseudomonadota</taxon>
        <taxon>Alphaproteobacteria</taxon>
        <taxon>Hyphomicrobiales</taxon>
        <taxon>Nitrobacteraceae</taxon>
        <taxon>Bradyrhizobium</taxon>
    </lineage>
</organism>
<dbReference type="EMBL" id="M26753">
    <property type="protein sequence ID" value="AAA26214.1"/>
    <property type="molecule type" value="Genomic_DNA"/>
</dbReference>
<dbReference type="EMBL" id="BA000040">
    <property type="protein sequence ID" value="BAC50213.1"/>
    <property type="molecule type" value="Genomic_DNA"/>
</dbReference>
<dbReference type="EMBL" id="M10926">
    <property type="status" value="NOT_ANNOTATED_CDS"/>
    <property type="molecule type" value="Genomic_DNA"/>
</dbReference>
<dbReference type="PIR" id="A33600">
    <property type="entry name" value="A33600"/>
</dbReference>
<dbReference type="RefSeq" id="NP_771588.1">
    <property type="nucleotide sequence ID" value="NC_004463.1"/>
</dbReference>
<dbReference type="RefSeq" id="WP_007603495.1">
    <property type="nucleotide sequence ID" value="NZ_CP011360.1"/>
</dbReference>
<dbReference type="SMR" id="P14179"/>
<dbReference type="FunCoup" id="P14179">
    <property type="interactions" value="619"/>
</dbReference>
<dbReference type="STRING" id="224911.AAV28_22095"/>
<dbReference type="EnsemblBacteria" id="BAC50213">
    <property type="protein sequence ID" value="BAC50213"/>
    <property type="gene ID" value="BAC50213"/>
</dbReference>
<dbReference type="KEGG" id="bja:blr4948"/>
<dbReference type="PATRIC" id="fig|224911.44.peg.4802"/>
<dbReference type="eggNOG" id="COG0347">
    <property type="taxonomic scope" value="Bacteria"/>
</dbReference>
<dbReference type="HOGENOM" id="CLU_082268_0_0_5"/>
<dbReference type="InParanoid" id="P14179"/>
<dbReference type="OrthoDB" id="9802729at2"/>
<dbReference type="PhylomeDB" id="P14179"/>
<dbReference type="PRO" id="PR:P14179"/>
<dbReference type="Proteomes" id="UP000002526">
    <property type="component" value="Chromosome"/>
</dbReference>
<dbReference type="GO" id="GO:0005829">
    <property type="term" value="C:cytosol"/>
    <property type="evidence" value="ECO:0000318"/>
    <property type="project" value="GO_Central"/>
</dbReference>
<dbReference type="GO" id="GO:0005524">
    <property type="term" value="F:ATP binding"/>
    <property type="evidence" value="ECO:0000318"/>
    <property type="project" value="GO_Central"/>
</dbReference>
<dbReference type="GO" id="GO:0030234">
    <property type="term" value="F:enzyme regulator activity"/>
    <property type="evidence" value="ECO:0000318"/>
    <property type="project" value="GO_Central"/>
</dbReference>
<dbReference type="GO" id="GO:0009399">
    <property type="term" value="P:nitrogen fixation"/>
    <property type="evidence" value="ECO:0007669"/>
    <property type="project" value="UniProtKB-KW"/>
</dbReference>
<dbReference type="GO" id="GO:0006808">
    <property type="term" value="P:regulation of nitrogen utilization"/>
    <property type="evidence" value="ECO:0000318"/>
    <property type="project" value="GO_Central"/>
</dbReference>
<dbReference type="FunFam" id="3.30.70.120:FF:000001">
    <property type="entry name" value="Nitrogen regulatory protein P-II"/>
    <property type="match status" value="1"/>
</dbReference>
<dbReference type="Gene3D" id="3.30.70.120">
    <property type="match status" value="1"/>
</dbReference>
<dbReference type="InterPro" id="IPR002187">
    <property type="entry name" value="N-reg_PII"/>
</dbReference>
<dbReference type="InterPro" id="IPR011322">
    <property type="entry name" value="N-reg_PII-like_a/b"/>
</dbReference>
<dbReference type="InterPro" id="IPR015867">
    <property type="entry name" value="N-reg_PII/ATP_PRibTrfase_C"/>
</dbReference>
<dbReference type="InterPro" id="IPR017918">
    <property type="entry name" value="N-reg_PII_CS"/>
</dbReference>
<dbReference type="InterPro" id="IPR002332">
    <property type="entry name" value="N-reg_PII_urydylation_site"/>
</dbReference>
<dbReference type="PANTHER" id="PTHR30115">
    <property type="entry name" value="NITROGEN REGULATORY PROTEIN P-II"/>
    <property type="match status" value="1"/>
</dbReference>
<dbReference type="PANTHER" id="PTHR30115:SF11">
    <property type="entry name" value="NITROGEN REGULATORY PROTEIN P-II HOMOLOG"/>
    <property type="match status" value="1"/>
</dbReference>
<dbReference type="Pfam" id="PF00543">
    <property type="entry name" value="P-II"/>
    <property type="match status" value="1"/>
</dbReference>
<dbReference type="PIRSF" id="PIRSF039144">
    <property type="entry name" value="GlnB"/>
    <property type="match status" value="1"/>
</dbReference>
<dbReference type="PRINTS" id="PR00340">
    <property type="entry name" value="PIIGLNB"/>
</dbReference>
<dbReference type="SMART" id="SM00938">
    <property type="entry name" value="P-II"/>
    <property type="match status" value="1"/>
</dbReference>
<dbReference type="SUPFAM" id="SSF54913">
    <property type="entry name" value="GlnB-like"/>
    <property type="match status" value="1"/>
</dbReference>
<dbReference type="PROSITE" id="PS00638">
    <property type="entry name" value="PII_GLNB_CTER"/>
    <property type="match status" value="1"/>
</dbReference>
<dbReference type="PROSITE" id="PS51343">
    <property type="entry name" value="PII_GLNB_DOM"/>
    <property type="match status" value="1"/>
</dbReference>
<dbReference type="PROSITE" id="PS00496">
    <property type="entry name" value="PII_GLNB_UMP"/>
    <property type="match status" value="1"/>
</dbReference>
<gene>
    <name type="primary">glnB</name>
    <name type="ordered locus">blr4948</name>
</gene>
<name>GLNB_BRADU</name>
<comment type="function">
    <text>In nitrogen-limiting conditions, when the ratio of Gln to 2-ketoglutarate decreases, P-II is uridylylated to P-II-UMP. P-II-UMP allows the deadenylation of glutamine synthetase (GS), thus activating the enzyme. Conversely, in nitrogen excess P-II is deuridylated and promotes the adenylation of GS. P-II indirectly controls the transcription of the GS gene (glnA). P-II prevents NR-II-catalyzed conversion of NR-I to NR-I-phosphate, the transcriptional activator of glnA. When P-II is uridylylated to P-II-UMP, these events are reversed.</text>
</comment>
<comment type="subunit">
    <text evidence="1">Homotrimer.</text>
</comment>
<comment type="similarity">
    <text evidence="2">Belongs to the P(II) protein family.</text>
</comment>